<reference key="1">
    <citation type="submission" date="2009-01" db="EMBL/GenBank/DDBJ databases">
        <title>Complete sequence of Clostridium cellulolyticum H10.</title>
        <authorList>
            <consortium name="US DOE Joint Genome Institute"/>
            <person name="Lucas S."/>
            <person name="Copeland A."/>
            <person name="Lapidus A."/>
            <person name="Glavina del Rio T."/>
            <person name="Dalin E."/>
            <person name="Tice H."/>
            <person name="Bruce D."/>
            <person name="Goodwin L."/>
            <person name="Pitluck S."/>
            <person name="Chertkov O."/>
            <person name="Saunders E."/>
            <person name="Brettin T."/>
            <person name="Detter J.C."/>
            <person name="Han C."/>
            <person name="Larimer F."/>
            <person name="Land M."/>
            <person name="Hauser L."/>
            <person name="Kyrpides N."/>
            <person name="Ivanova N."/>
            <person name="Zhou J."/>
            <person name="Richardson P."/>
        </authorList>
    </citation>
    <scope>NUCLEOTIDE SEQUENCE [LARGE SCALE GENOMIC DNA]</scope>
    <source>
        <strain>ATCC 35319 / DSM 5812 / JCM 6584 / H10</strain>
    </source>
</reference>
<comment type="function">
    <text evidence="1">Produces ATP from ADP in the presence of a proton gradient across the membrane. The gamma chain is believed to be important in regulating ATPase activity and the flow of protons through the CF(0) complex.</text>
</comment>
<comment type="subunit">
    <text evidence="1">F-type ATPases have 2 components, CF(1) - the catalytic core - and CF(0) - the membrane proton channel. CF(1) has five subunits: alpha(3), beta(3), gamma(1), delta(1), epsilon(1). CF(0) has three main subunits: a, b and c.</text>
</comment>
<comment type="subcellular location">
    <subcellularLocation>
        <location evidence="1">Cell membrane</location>
        <topology evidence="1">Peripheral membrane protein</topology>
    </subcellularLocation>
</comment>
<comment type="similarity">
    <text evidence="1">Belongs to the ATPase gamma chain family.</text>
</comment>
<accession>B8I578</accession>
<feature type="chain" id="PRO_1000213029" description="ATP synthase gamma chain">
    <location>
        <begin position="1"/>
        <end position="294"/>
    </location>
</feature>
<evidence type="ECO:0000255" key="1">
    <source>
        <dbReference type="HAMAP-Rule" id="MF_00815"/>
    </source>
</evidence>
<keyword id="KW-0066">ATP synthesis</keyword>
<keyword id="KW-1003">Cell membrane</keyword>
<keyword id="KW-0139">CF(1)</keyword>
<keyword id="KW-0375">Hydrogen ion transport</keyword>
<keyword id="KW-0406">Ion transport</keyword>
<keyword id="KW-0472">Membrane</keyword>
<keyword id="KW-1185">Reference proteome</keyword>
<keyword id="KW-0813">Transport</keyword>
<dbReference type="EMBL" id="CP001348">
    <property type="protein sequence ID" value="ACL74658.1"/>
    <property type="molecule type" value="Genomic_DNA"/>
</dbReference>
<dbReference type="RefSeq" id="WP_012634723.1">
    <property type="nucleotide sequence ID" value="NC_011898.1"/>
</dbReference>
<dbReference type="SMR" id="B8I578"/>
<dbReference type="STRING" id="394503.Ccel_0271"/>
<dbReference type="KEGG" id="cce:Ccel_0271"/>
<dbReference type="eggNOG" id="COG0224">
    <property type="taxonomic scope" value="Bacteria"/>
</dbReference>
<dbReference type="HOGENOM" id="CLU_050669_0_1_9"/>
<dbReference type="OrthoDB" id="9812769at2"/>
<dbReference type="Proteomes" id="UP000001349">
    <property type="component" value="Chromosome"/>
</dbReference>
<dbReference type="GO" id="GO:0005886">
    <property type="term" value="C:plasma membrane"/>
    <property type="evidence" value="ECO:0007669"/>
    <property type="project" value="UniProtKB-SubCell"/>
</dbReference>
<dbReference type="GO" id="GO:0045259">
    <property type="term" value="C:proton-transporting ATP synthase complex"/>
    <property type="evidence" value="ECO:0007669"/>
    <property type="project" value="UniProtKB-KW"/>
</dbReference>
<dbReference type="GO" id="GO:0005524">
    <property type="term" value="F:ATP binding"/>
    <property type="evidence" value="ECO:0007669"/>
    <property type="project" value="UniProtKB-UniRule"/>
</dbReference>
<dbReference type="GO" id="GO:0046933">
    <property type="term" value="F:proton-transporting ATP synthase activity, rotational mechanism"/>
    <property type="evidence" value="ECO:0007669"/>
    <property type="project" value="UniProtKB-UniRule"/>
</dbReference>
<dbReference type="GO" id="GO:0042777">
    <property type="term" value="P:proton motive force-driven plasma membrane ATP synthesis"/>
    <property type="evidence" value="ECO:0007669"/>
    <property type="project" value="UniProtKB-UniRule"/>
</dbReference>
<dbReference type="CDD" id="cd12151">
    <property type="entry name" value="F1-ATPase_gamma"/>
    <property type="match status" value="1"/>
</dbReference>
<dbReference type="Gene3D" id="3.40.1380.10">
    <property type="match status" value="1"/>
</dbReference>
<dbReference type="Gene3D" id="1.10.287.80">
    <property type="entry name" value="ATP synthase, gamma subunit, helix hairpin domain"/>
    <property type="match status" value="1"/>
</dbReference>
<dbReference type="HAMAP" id="MF_00815">
    <property type="entry name" value="ATP_synth_gamma_bact"/>
    <property type="match status" value="1"/>
</dbReference>
<dbReference type="InterPro" id="IPR035968">
    <property type="entry name" value="ATP_synth_F1_ATPase_gsu"/>
</dbReference>
<dbReference type="InterPro" id="IPR000131">
    <property type="entry name" value="ATP_synth_F1_gsu"/>
</dbReference>
<dbReference type="InterPro" id="IPR023632">
    <property type="entry name" value="ATP_synth_F1_gsu_CS"/>
</dbReference>
<dbReference type="NCBIfam" id="TIGR01146">
    <property type="entry name" value="ATPsyn_F1gamma"/>
    <property type="match status" value="1"/>
</dbReference>
<dbReference type="PANTHER" id="PTHR11693">
    <property type="entry name" value="ATP SYNTHASE GAMMA CHAIN"/>
    <property type="match status" value="1"/>
</dbReference>
<dbReference type="PANTHER" id="PTHR11693:SF22">
    <property type="entry name" value="ATP SYNTHASE SUBUNIT GAMMA, MITOCHONDRIAL"/>
    <property type="match status" value="1"/>
</dbReference>
<dbReference type="Pfam" id="PF00231">
    <property type="entry name" value="ATP-synt"/>
    <property type="match status" value="1"/>
</dbReference>
<dbReference type="PRINTS" id="PR00126">
    <property type="entry name" value="ATPASEGAMMA"/>
</dbReference>
<dbReference type="SUPFAM" id="SSF52943">
    <property type="entry name" value="ATP synthase (F1-ATPase), gamma subunit"/>
    <property type="match status" value="1"/>
</dbReference>
<dbReference type="PROSITE" id="PS00153">
    <property type="entry name" value="ATPASE_GAMMA"/>
    <property type="match status" value="1"/>
</dbReference>
<protein>
    <recommendedName>
        <fullName evidence="1">ATP synthase gamma chain</fullName>
    </recommendedName>
    <alternativeName>
        <fullName evidence="1">ATP synthase F1 sector gamma subunit</fullName>
    </alternativeName>
    <alternativeName>
        <fullName evidence="1">F-ATPase gamma subunit</fullName>
    </alternativeName>
</protein>
<gene>
    <name evidence="1" type="primary">atpG</name>
    <name type="ordered locus">Ccel_0271</name>
</gene>
<name>ATPG_RUMCH</name>
<sequence length="294" mass="33565">MANNMREIKSRIKSINQMRQITKAMKLISASKLKKARAQLEETLPYYNKVKETIADILAHSAEVESRFFDIREEKEGKKKAYIVMAGDKGLAGGYNSNIFKLTEHEIGDNKENALLLVAGTTGRSYFSRKEYHVHTEFDYAVQNPTVFRAREITEIILDLYNKQEVDEVYIVYTQMISAISLEPRILKLLPIEISALREDVKADEIVLDQRLKYEPSVTEVLNVLIPKYIKGIMYGTFVEAFTSEQNARMTAMDNATKNADEMLQKLNLYYNRARQATITQEISEIVGGASALE</sequence>
<organism>
    <name type="scientific">Ruminiclostridium cellulolyticum (strain ATCC 35319 / DSM 5812 / JCM 6584 / H10)</name>
    <name type="common">Clostridium cellulolyticum</name>
    <dbReference type="NCBI Taxonomy" id="394503"/>
    <lineage>
        <taxon>Bacteria</taxon>
        <taxon>Bacillati</taxon>
        <taxon>Bacillota</taxon>
        <taxon>Clostridia</taxon>
        <taxon>Eubacteriales</taxon>
        <taxon>Oscillospiraceae</taxon>
        <taxon>Ruminiclostridium</taxon>
    </lineage>
</organism>
<proteinExistence type="inferred from homology"/>